<reference key="1">
    <citation type="journal article" date="1999" name="J. Plant Res.">
        <title>Molecular systematics of Trilliaceae I. Phylogenetic analyses of Trillium using matK gene sequences.</title>
        <authorList>
            <person name="Kazempour Osaloo S."/>
            <person name="Utech F.H."/>
            <person name="Ohara M."/>
            <person name="Kawano S."/>
        </authorList>
    </citation>
    <scope>NUCLEOTIDE SEQUENCE [GENOMIC DNA]</scope>
    <source>
        <tissue>Leaf</tissue>
    </source>
</reference>
<protein>
    <recommendedName>
        <fullName evidence="1">Maturase K</fullName>
    </recommendedName>
    <alternativeName>
        <fullName evidence="1">Intron maturase</fullName>
    </alternativeName>
</protein>
<geneLocation type="chloroplast"/>
<gene>
    <name evidence="1" type="primary">matK</name>
</gene>
<dbReference type="EMBL" id="AB017389">
    <property type="protein sequence ID" value="BAA36805.1"/>
    <property type="molecule type" value="Genomic_DNA"/>
</dbReference>
<dbReference type="GO" id="GO:0009507">
    <property type="term" value="C:chloroplast"/>
    <property type="evidence" value="ECO:0007669"/>
    <property type="project" value="UniProtKB-SubCell"/>
</dbReference>
<dbReference type="GO" id="GO:0003723">
    <property type="term" value="F:RNA binding"/>
    <property type="evidence" value="ECO:0007669"/>
    <property type="project" value="UniProtKB-KW"/>
</dbReference>
<dbReference type="GO" id="GO:0006397">
    <property type="term" value="P:mRNA processing"/>
    <property type="evidence" value="ECO:0007669"/>
    <property type="project" value="UniProtKB-KW"/>
</dbReference>
<dbReference type="GO" id="GO:0008380">
    <property type="term" value="P:RNA splicing"/>
    <property type="evidence" value="ECO:0007669"/>
    <property type="project" value="UniProtKB-UniRule"/>
</dbReference>
<dbReference type="GO" id="GO:0008033">
    <property type="term" value="P:tRNA processing"/>
    <property type="evidence" value="ECO:0007669"/>
    <property type="project" value="UniProtKB-KW"/>
</dbReference>
<dbReference type="HAMAP" id="MF_01390">
    <property type="entry name" value="MatK"/>
    <property type="match status" value="1"/>
</dbReference>
<dbReference type="InterPro" id="IPR024937">
    <property type="entry name" value="Domain_X"/>
</dbReference>
<dbReference type="InterPro" id="IPR002866">
    <property type="entry name" value="Maturase_MatK"/>
</dbReference>
<dbReference type="InterPro" id="IPR024942">
    <property type="entry name" value="Maturase_MatK_N"/>
</dbReference>
<dbReference type="PANTHER" id="PTHR34811">
    <property type="entry name" value="MATURASE K"/>
    <property type="match status" value="1"/>
</dbReference>
<dbReference type="PANTHER" id="PTHR34811:SF1">
    <property type="entry name" value="MATURASE K"/>
    <property type="match status" value="1"/>
</dbReference>
<dbReference type="Pfam" id="PF01348">
    <property type="entry name" value="Intron_maturas2"/>
    <property type="match status" value="1"/>
</dbReference>
<dbReference type="Pfam" id="PF01824">
    <property type="entry name" value="MatK_N"/>
    <property type="match status" value="1"/>
</dbReference>
<comment type="function">
    <text evidence="1">Usually encoded in the trnK tRNA gene intron. Probably assists in splicing its own and other chloroplast group II introns.</text>
</comment>
<comment type="subcellular location">
    <subcellularLocation>
        <location>Plastid</location>
        <location>Chloroplast</location>
    </subcellularLocation>
</comment>
<comment type="similarity">
    <text evidence="1">Belongs to the intron maturase 2 family. MatK subfamily.</text>
</comment>
<name>MATK_TRIFE</name>
<accession>Q7JEV9</accession>
<sequence length="521" mass="62039">MEELQLQGYLEKDGSRQQNFLYPLIFQEYIYTLAHDHGLNSSIFYEPMEIVGLGYDNKSSSVLVKRLITQMYQQNSLIYSMNDFNQNRFVGHNNSFYSNFYSQMVSEGFAVIVEIPFSLRLVPSSEEIQIPKSQNLRSIHSIFPFLEDKLSHLNYVLDILIPYPIHLEILVQILQCWIQDVPSLHFLRFFLHEFHNWNNLNLITPTKSISVFSKENKRLFWILYNSYVSEYEFLFVFLRKQSYYLRSTSSRAFLERTHFYVKIEHLIDVCHNHFQKILWFFKDSFMHYVRYKGKAILASRGTYLLIKKWKCYLVNFWQYNFHFWSKPYRIHINPFSNYSFYFLGYISSVLINPSAVKNQMLENFYLVDTLTQKFDTIVPVIPLIGSLSKAKFCTILGHPISKPIWAELSDSDIMDRFGRICRNLSHYHSGSSKKQSLYRIKYILRLSCARTLARKHKSTVRNLLQRLGSGLLEEFFTEEEQVISPIFPKTTLFPLHGSHRERIWYLDIIRINDLANYLDWS</sequence>
<proteinExistence type="inferred from homology"/>
<organism>
    <name type="scientific">Trillium flexipes</name>
    <name type="common">Nodding wakerobin</name>
    <dbReference type="NCBI Taxonomy" id="82483"/>
    <lineage>
        <taxon>Eukaryota</taxon>
        <taxon>Viridiplantae</taxon>
        <taxon>Streptophyta</taxon>
        <taxon>Embryophyta</taxon>
        <taxon>Tracheophyta</taxon>
        <taxon>Spermatophyta</taxon>
        <taxon>Magnoliopsida</taxon>
        <taxon>Liliopsida</taxon>
        <taxon>Liliales</taxon>
        <taxon>Melanthiaceae</taxon>
        <taxon>Trillium</taxon>
    </lineage>
</organism>
<keyword id="KW-0150">Chloroplast</keyword>
<keyword id="KW-0507">mRNA processing</keyword>
<keyword id="KW-0934">Plastid</keyword>
<keyword id="KW-0694">RNA-binding</keyword>
<keyword id="KW-0819">tRNA processing</keyword>
<feature type="chain" id="PRO_0000143764" description="Maturase K">
    <location>
        <begin position="1"/>
        <end position="521"/>
    </location>
</feature>
<evidence type="ECO:0000255" key="1">
    <source>
        <dbReference type="HAMAP-Rule" id="MF_01390"/>
    </source>
</evidence>